<gene>
    <name type="primary">fimA</name>
</gene>
<protein>
    <recommendedName>
        <fullName>Major fimbrium subunit FimA type-4</fullName>
    </recommendedName>
    <alternativeName>
        <fullName>Fimbrillin</fullName>
        <shortName>Fimbrilin</shortName>
    </alternativeName>
    <alternativeName>
        <fullName>Major fimbrial subunit protein type IV</fullName>
    </alternativeName>
</protein>
<comment type="function">
    <text evidence="4 6">Structural subunit of the major fimbriae (Probable). These long, filamentous pili are attached to the cell surface; they mediate biofilm formation, adhesion onto host cells and onto other bacteria that are part of the oral microbiome. They play an important role in the invasion of periodontal tissues. Fimbriae and their constituents are major virulence factors. FimA proteins from different strains have highly divergent sequences, and this has been used for classification. The sequence-based classification correlates with pathogenicity.</text>
</comment>
<comment type="subunit">
    <text evidence="1 2">Fimbriae are composed of a major, structural subunit (FimA) and the minor components FimC, FimD and FimE (By similarity). Head-to-tail oligomerization of FimA molecules mediates assembly of the fimbrium stalk, while the minor components probably form the fimbrium tip. Linear, head-to-tail oligomerization of FimA is mediated by a conformation change, facilitating the insertion of a C-terminal beta-strand into a groove in the N-terminal domain of the following subunit (By similarity).</text>
</comment>
<comment type="subcellular location">
    <subcellularLocation>
        <location evidence="1">Fimbrium</location>
    </subcellularLocation>
    <subcellularLocation>
        <location evidence="1">Cell outer membrane</location>
    </subcellularLocation>
    <text evidence="1">Synthesized as palmitoylated precursor. The lipidated propeptide is removed during processing to the mature protein.</text>
</comment>
<comment type="PTM">
    <text evidence="1">Synthesized as palmitoylated lipoprotein precursor. Efficient export to the outer membrane and integration into fimbriae requires lipidation and subsequent proteolytic removal of the lipidated propeptide.</text>
</comment>
<comment type="miscellaneous">
    <text evidence="6">The name (major fimbrium subunit) does not indicate the abundance of the protein, but is derived from the greater length of the major fimbriae. In strain ATCC 33277 and strain 381, major fimbriae are 300 - 1600 nM in length and about 5 nm in diameter. In contrast, minor fimbriae are only about 80 - 120 nm long. This length difference is observed only in a small number of strains, including strain ATCC 33277 and strain 381, and is due to a loss of function mutation in FimB, a protein that restricts fimbrial length in other strains.</text>
</comment>
<comment type="similarity">
    <text evidence="6">Belongs to the bacteroidetes fimbrillin superfamily. FimA/Mfa1 family.</text>
</comment>
<comment type="sequence caution" evidence="6">
    <conflict type="erroneous initiation">
        <sequence resource="EMBL-CDS" id="BAA04628"/>
    </conflict>
    <text>Truncated N-terminus.</text>
</comment>
<evidence type="ECO:0000250" key="1">
    <source>
        <dbReference type="UniProtKB" id="B2RH54"/>
    </source>
</evidence>
<evidence type="ECO:0000250" key="2">
    <source>
        <dbReference type="UniProtKB" id="P59914"/>
    </source>
</evidence>
<evidence type="ECO:0000255" key="3">
    <source>
        <dbReference type="PROSITE-ProRule" id="PRU00303"/>
    </source>
</evidence>
<evidence type="ECO:0000269" key="4">
    <source>
    </source>
</evidence>
<evidence type="ECO:0000269" key="5">
    <source>
    </source>
</evidence>
<evidence type="ECO:0000305" key="6"/>
<organism>
    <name type="scientific">Porphyromonas gingivalis</name>
    <name type="common">Bacteroides gingivalis</name>
    <dbReference type="NCBI Taxonomy" id="837"/>
    <lineage>
        <taxon>Bacteria</taxon>
        <taxon>Pseudomonadati</taxon>
        <taxon>Bacteroidota</taxon>
        <taxon>Bacteroidia</taxon>
        <taxon>Bacteroidales</taxon>
        <taxon>Porphyromonadaceae</taxon>
        <taxon>Porphyromonas</taxon>
    </lineage>
</organism>
<name>FIMA4_PORGN</name>
<sequence length="388" mass="41259">MKKTKFFLLGLAALAMTACNKDNEAEPIVETDATVSFIIKSGEGRAVGDGLADAKITKLTAMVYAGQIQEGIKTVEEADGVLKVEGIPCKSGANRVLVVVANHNYELTGKSLNEVEALTTSLTAENQNAKNLIMTGKSAAFTIKPGSNHYGYPDGTTSDNLVSAGTPLAVTRVHAGISFAGVEVNMATQYQNYYSFNPADAKIAALVAKKDSKIFGNSLVSNTNAYLYGVQTPAGLYTPDAAGETYELEASLNTNYAVGAGFYVLESKYDASNELRPTILCIYGKLLDKDGNPLTEPALTDAINAGFCDGDGTTYYPVLVNYDGNGYIYSGAITQGQNKIVRNNHYKITLNITGPGTNTPENPQPVQANLNVTCQVTPWVVVNQAATW</sequence>
<feature type="signal peptide" evidence="3">
    <location>
        <begin position="1"/>
        <end position="18"/>
    </location>
</feature>
<feature type="propeptide" id="PRO_0000009166" evidence="5">
    <location>
        <begin position="19"/>
        <end position="45"/>
    </location>
</feature>
<feature type="chain" id="PRO_0000009167" description="Major fimbrium subunit FimA type-4">
    <location>
        <begin position="46"/>
        <end position="388"/>
    </location>
</feature>
<feature type="region of interest" description="Important for oligomerization and fimbrium assembly" evidence="2">
    <location>
        <begin position="379"/>
        <end position="388"/>
    </location>
</feature>
<feature type="site" description="Cleavage; by gingipain" evidence="1">
    <location>
        <begin position="45"/>
        <end position="46"/>
    </location>
</feature>
<feature type="lipid moiety-binding region" description="N-palmitoyl cysteine" evidence="3">
    <location>
        <position position="19"/>
    </location>
</feature>
<feature type="lipid moiety-binding region" description="S-diacylglycerol cysteine" evidence="3">
    <location>
        <position position="19"/>
    </location>
</feature>
<keyword id="KW-0130">Cell adhesion</keyword>
<keyword id="KW-0998">Cell outer membrane</keyword>
<keyword id="KW-0903">Direct protein sequencing</keyword>
<keyword id="KW-0281">Fimbrium</keyword>
<keyword id="KW-0449">Lipoprotein</keyword>
<keyword id="KW-0472">Membrane</keyword>
<keyword id="KW-0564">Palmitate</keyword>
<keyword id="KW-0732">Signal</keyword>
<keyword id="KW-0843">Virulence</keyword>
<proteinExistence type="evidence at protein level"/>
<dbReference type="EMBL" id="D17802">
    <property type="protein sequence ID" value="BAA04628.1"/>
    <property type="status" value="ALT_INIT"/>
    <property type="molecule type" value="Genomic_DNA"/>
</dbReference>
<dbReference type="PIR" id="JN0921">
    <property type="entry name" value="JN0921"/>
</dbReference>
<dbReference type="RefSeq" id="WP_077070980.1">
    <property type="nucleotide sequence ID" value="NZ_FUFI01000044.1"/>
</dbReference>
<dbReference type="SMR" id="Q51827"/>
<dbReference type="GO" id="GO:0009279">
    <property type="term" value="C:cell outer membrane"/>
    <property type="evidence" value="ECO:0007669"/>
    <property type="project" value="UniProtKB-SubCell"/>
</dbReference>
<dbReference type="GO" id="GO:0009289">
    <property type="term" value="C:pilus"/>
    <property type="evidence" value="ECO:0000250"/>
    <property type="project" value="UniProtKB"/>
</dbReference>
<dbReference type="GO" id="GO:0005198">
    <property type="term" value="F:structural molecule activity"/>
    <property type="evidence" value="ECO:0007669"/>
    <property type="project" value="InterPro"/>
</dbReference>
<dbReference type="GO" id="GO:0007155">
    <property type="term" value="P:cell adhesion"/>
    <property type="evidence" value="ECO:0007669"/>
    <property type="project" value="UniProtKB-KW"/>
</dbReference>
<dbReference type="FunFam" id="2.60.40.3690:FF:000001">
    <property type="entry name" value="Major fimbrium subunit FimA type-4"/>
    <property type="match status" value="1"/>
</dbReference>
<dbReference type="Gene3D" id="2.60.40.3690">
    <property type="match status" value="1"/>
</dbReference>
<dbReference type="InterPro" id="IPR053878">
    <property type="entry name" value="FimA_C"/>
</dbReference>
<dbReference type="InterPro" id="IPR029141">
    <property type="entry name" value="FimA_N"/>
</dbReference>
<dbReference type="InterPro" id="IPR008110">
    <property type="entry name" value="Fimbrillin"/>
</dbReference>
<dbReference type="Pfam" id="PF22492">
    <property type="entry name" value="FimA4_C"/>
    <property type="match status" value="1"/>
</dbReference>
<dbReference type="Pfam" id="PF06321">
    <property type="entry name" value="P_gingi_FimA"/>
    <property type="match status" value="1"/>
</dbReference>
<dbReference type="PRINTS" id="PR01737">
    <property type="entry name" value="FIMBRILLIN"/>
</dbReference>
<dbReference type="PROSITE" id="PS51257">
    <property type="entry name" value="PROKAR_LIPOPROTEIN"/>
    <property type="match status" value="1"/>
</dbReference>
<reference key="1">
    <citation type="journal article" date="1993" name="Biochem. Biophys. Res. Commun.">
        <title>Molecular cloning and sequencing of the fimbrilin gene of Porphyromonas gingivalis strains and characterization of recombinant proteins.</title>
        <authorList>
            <person name="Fujiwara T."/>
            <person name="Morishima S."/>
            <person name="Takahashi I."/>
            <person name="Hamada S."/>
        </authorList>
    </citation>
    <scope>NUCLEOTIDE SEQUENCE [GENOMIC DNA]</scope>
    <source>
        <strain>HG564</strain>
    </source>
</reference>
<reference key="2">
    <citation type="journal article" date="1994" name="FEMS Microbiol. Lett.">
        <title>Inconsistency between the fimbrilin gene and the antigenicity of lipopolysaccharides in selected strains of Porphyromonas gingivalis.</title>
        <authorList>
            <person name="Fujiwara T."/>
            <person name="Nakagawa I."/>
            <person name="Morishima S."/>
            <person name="Takahashi I."/>
            <person name="Hamada S."/>
        </authorList>
    </citation>
    <scope>NUCLEOTIDE SEQUENCE [GENOMIC DNA]</scope>
    <source>
        <strain>HG564</strain>
    </source>
</reference>
<reference key="3">
    <citation type="journal article" date="1991" name="Infect. Immun.">
        <title>Porphyromonas (Bacteroides) gingivalis fimbrillin: size, amino-terminal sequence, and antigenic heterogeneity.</title>
        <authorList>
            <person name="Lee J.Y."/>
            <person name="Sojar H.T."/>
            <person name="Bedi G.S."/>
            <person name="Genco R.J."/>
        </authorList>
    </citation>
    <scope>PROTEIN SEQUENCE OF 46-66</scope>
    <source>
        <strain>HG564</strain>
    </source>
</reference>
<reference key="4">
    <citation type="journal article" date="2002" name="Infect. Immun.">
        <title>Functional differences among FimA variants of Porphyromonas gingivalis and their effects on adhesion to and invasion of human epithelial cells.</title>
        <authorList>
            <person name="Nakagawa I."/>
            <person name="Amano A."/>
            <person name="Kuboniwa M."/>
            <person name="Nakamura T."/>
            <person name="Kawabata S."/>
            <person name="Hamada S."/>
        </authorList>
    </citation>
    <scope>FUNCTION</scope>
    <scope>CLASSIFICATION INTO TYPES</scope>
</reference>
<accession>Q51827</accession>